<protein>
    <recommendedName>
        <fullName evidence="1">DNA-directed RNA polymerase subunit beta</fullName>
        <shortName evidence="1">RNAP subunit beta</shortName>
        <ecNumber evidence="1">2.7.7.6</ecNumber>
    </recommendedName>
    <alternativeName>
        <fullName evidence="1">RNA polymerase subunit beta</fullName>
    </alternativeName>
    <alternativeName>
        <fullName evidence="1">Transcriptase subunit beta</fullName>
    </alternativeName>
</protein>
<feature type="chain" id="PRO_0000047991" description="DNA-directed RNA polymerase subunit beta">
    <location>
        <begin position="1"/>
        <end position="1434"/>
    </location>
</feature>
<reference key="1">
    <citation type="journal article" date="2000" name="Nature">
        <title>The complete sequence of the mucosal pathogen Ureaplasma urealyticum.</title>
        <authorList>
            <person name="Glass J.I."/>
            <person name="Lefkowitz E.J."/>
            <person name="Glass J.S."/>
            <person name="Heiner C.R."/>
            <person name="Chen E.Y."/>
            <person name="Cassell G.H."/>
        </authorList>
    </citation>
    <scope>NUCLEOTIDE SEQUENCE [LARGE SCALE GENOMIC DNA]</scope>
    <source>
        <strain>ATCC 700970</strain>
    </source>
</reference>
<gene>
    <name evidence="1" type="primary">rpoB</name>
    <name type="ordered locus">UU187</name>
</gene>
<comment type="function">
    <text evidence="1">DNA-dependent RNA polymerase catalyzes the transcription of DNA into RNA using the four ribonucleoside triphosphates as substrates.</text>
</comment>
<comment type="catalytic activity">
    <reaction evidence="1">
        <text>RNA(n) + a ribonucleoside 5'-triphosphate = RNA(n+1) + diphosphate</text>
        <dbReference type="Rhea" id="RHEA:21248"/>
        <dbReference type="Rhea" id="RHEA-COMP:14527"/>
        <dbReference type="Rhea" id="RHEA-COMP:17342"/>
        <dbReference type="ChEBI" id="CHEBI:33019"/>
        <dbReference type="ChEBI" id="CHEBI:61557"/>
        <dbReference type="ChEBI" id="CHEBI:140395"/>
        <dbReference type="EC" id="2.7.7.6"/>
    </reaction>
</comment>
<comment type="subunit">
    <text evidence="1">The RNAP catalytic core consists of 2 alpha, 1 beta, 1 beta' and 1 omega subunit. When a sigma factor is associated with the core the holoenzyme is formed, which can initiate transcription.</text>
</comment>
<comment type="similarity">
    <text evidence="1">Belongs to the RNA polymerase beta chain family.</text>
</comment>
<sequence length="1434" mass="162023">MQNNKNYTEKFITDKVMRRDYSKIKSNFEGPNLLEIQVESFKRFMEKDLKEVISSIFPLKSPQGKYTLAFKGLKIKQPTKDESACRDEGKTFETPIYIDLELTDNYTGEVKRAQRNTKTGEDGIYLGAIPKMTEKGTFVINGIEKFVISQIVRSPGIYVLGKSSIKLNGSRKRLFEGKICEIYPSKGTLMLGYIPKDRHNIQIVARDSSGDNAQTFSVTTLLKAFGLTSAEILKIFNNEKEIRESLEIEKYAPEYIFENSQENEIIFKIYSDAHDIHEKADRRESNNKLKEEYIEQGSPLLSKLKQLIFNYVEKNDEIDALLHENKDVEDASFIKNNKKLYDEREEIINCIISEKAAKDIVELLGINIKNIETLRHLGKASYQIALQQHFFNKRLYDISSAGRYKFEKKLLLSERLYQKVIANDIIDKKNNILIPKDTLITKEHIELIKKESRDKNIKWTKKINLLPTALESEIEQFLEYESIAVYKDNDLRDETTEIVGLASGCKLQTLTVADLVATTSYIYNLNYEIGEFDDIDHLGNKRLKLIHELLRARIATSMARIEKFINEKLAISDGSSNNITNVNDKGIDTELDREIEESDMSDEEKKKAISVKSIINTKQFQSLVKDFFNSHQLIQFIDQQNPLAELTNKRRISAMGPGGISREDPNLDIRDVHHSHSSRICPIETPEGMNIGLIMSLASLAKVDENGFIVAPYYVVEDGVVKEDYKYLTAHEDDNYIIAESSVQLDENKRILDEQVVARYRGSTGLFSPNEVDFIDIVPKQVVSIAASAIPFIENDDGARALMGSNMQRQATPLIKPYAPIVGTGTEFKIAHDSGMAVVAKNDGVVEFVDSQKIIIRNDNDKLDDYKLIKYRKSNQDTCNNQIPIVKVGQRVHKSETIGDGPAMQNGELALGRNILVGYTTWRGYNFEDAIIISERLVDQDVFTSIHIDEHTIQCMKTKNGDEEITRDMPNVSDTAKRFLDNQGIVLVGAEVHEGDVLVGKTTPRGNVETAPEDRLLQTIFGDKSKTVKDSSLKVKHGQEGIVAAVKRIKSSDENGSELPDDVIEIIKVYIVQKRKIQVGDKMAGRHGNKGIVSKVVPIQDMPFLKDGTPLDIMLNPLGVPSRMNIGQILELHLGYAAAEIGKKQLIQIAIDQLGYEKYISLFGINEIIAKKLYENISNLIKHKQAKQAKDIDLIDVTIILKELGLSYDDIGIKISTPVFDGANHDDIVSIMNEANIDIENNKGKQVLYDGRTGEPFDGLISVGLTYMLKLDHMVDDKIHSRSVGPYSKITQQPLGGKSQNGGQRFGEMEVWALEAYGAAYNLLEILTIKSDDVQGRNQAYNAIIKGHDVVADGMPESFKLLTKQMQGLGLCITVETKDDRMVDINEYTLNQNRLNNDDDEVILDENLKEINDSNEEIFNTNFNNNDYDDEENF</sequence>
<keyword id="KW-0240">DNA-directed RNA polymerase</keyword>
<keyword id="KW-0548">Nucleotidyltransferase</keyword>
<keyword id="KW-1185">Reference proteome</keyword>
<keyword id="KW-0804">Transcription</keyword>
<keyword id="KW-0808">Transferase</keyword>
<name>RPOB_UREPA</name>
<dbReference type="EC" id="2.7.7.6" evidence="1"/>
<dbReference type="EMBL" id="AF222894">
    <property type="protein sequence ID" value="AAF30594.1"/>
    <property type="molecule type" value="Genomic_DNA"/>
</dbReference>
<dbReference type="RefSeq" id="WP_010891703.1">
    <property type="nucleotide sequence ID" value="NC_002162.1"/>
</dbReference>
<dbReference type="SMR" id="Q9PQV6"/>
<dbReference type="STRING" id="273119.UU187"/>
<dbReference type="EnsemblBacteria" id="AAF30594">
    <property type="protein sequence ID" value="AAF30594"/>
    <property type="gene ID" value="UU187"/>
</dbReference>
<dbReference type="KEGG" id="uur:UU187"/>
<dbReference type="PATRIC" id="fig|273119.6.peg.194"/>
<dbReference type="eggNOG" id="COG0085">
    <property type="taxonomic scope" value="Bacteria"/>
</dbReference>
<dbReference type="HOGENOM" id="CLU_000524_4_1_14"/>
<dbReference type="OrthoDB" id="9803954at2"/>
<dbReference type="Proteomes" id="UP000000423">
    <property type="component" value="Chromosome"/>
</dbReference>
<dbReference type="GO" id="GO:0000428">
    <property type="term" value="C:DNA-directed RNA polymerase complex"/>
    <property type="evidence" value="ECO:0007669"/>
    <property type="project" value="UniProtKB-KW"/>
</dbReference>
<dbReference type="GO" id="GO:0003677">
    <property type="term" value="F:DNA binding"/>
    <property type="evidence" value="ECO:0007669"/>
    <property type="project" value="UniProtKB-UniRule"/>
</dbReference>
<dbReference type="GO" id="GO:0003899">
    <property type="term" value="F:DNA-directed RNA polymerase activity"/>
    <property type="evidence" value="ECO:0007669"/>
    <property type="project" value="UniProtKB-UniRule"/>
</dbReference>
<dbReference type="GO" id="GO:0032549">
    <property type="term" value="F:ribonucleoside binding"/>
    <property type="evidence" value="ECO:0007669"/>
    <property type="project" value="InterPro"/>
</dbReference>
<dbReference type="GO" id="GO:0006351">
    <property type="term" value="P:DNA-templated transcription"/>
    <property type="evidence" value="ECO:0007669"/>
    <property type="project" value="UniProtKB-UniRule"/>
</dbReference>
<dbReference type="CDD" id="cd00653">
    <property type="entry name" value="RNA_pol_B_RPB2"/>
    <property type="match status" value="1"/>
</dbReference>
<dbReference type="Gene3D" id="2.40.50.100">
    <property type="match status" value="1"/>
</dbReference>
<dbReference type="Gene3D" id="2.40.50.150">
    <property type="match status" value="1"/>
</dbReference>
<dbReference type="Gene3D" id="3.90.1100.10">
    <property type="match status" value="3"/>
</dbReference>
<dbReference type="Gene3D" id="2.30.150.10">
    <property type="entry name" value="DNA-directed RNA polymerase, beta subunit, external 1 domain"/>
    <property type="match status" value="1"/>
</dbReference>
<dbReference type="Gene3D" id="2.40.270.10">
    <property type="entry name" value="DNA-directed RNA polymerase, subunit 2, domain 6"/>
    <property type="match status" value="1"/>
</dbReference>
<dbReference type="Gene3D" id="3.90.1800.10">
    <property type="entry name" value="RNA polymerase alpha subunit dimerisation domain"/>
    <property type="match status" value="1"/>
</dbReference>
<dbReference type="Gene3D" id="3.90.1110.10">
    <property type="entry name" value="RNA polymerase Rpb2, domain 2"/>
    <property type="match status" value="2"/>
</dbReference>
<dbReference type="HAMAP" id="MF_01321">
    <property type="entry name" value="RNApol_bact_RpoB"/>
    <property type="match status" value="1"/>
</dbReference>
<dbReference type="InterPro" id="IPR042107">
    <property type="entry name" value="DNA-dir_RNA_pol_bsu_ext_1_sf"/>
</dbReference>
<dbReference type="InterPro" id="IPR019462">
    <property type="entry name" value="DNA-dir_RNA_pol_bsu_external_1"/>
</dbReference>
<dbReference type="InterPro" id="IPR015712">
    <property type="entry name" value="DNA-dir_RNA_pol_su2"/>
</dbReference>
<dbReference type="InterPro" id="IPR007120">
    <property type="entry name" value="DNA-dir_RNAP_su2_dom"/>
</dbReference>
<dbReference type="InterPro" id="IPR037033">
    <property type="entry name" value="DNA-dir_RNAP_su2_hyb_sf"/>
</dbReference>
<dbReference type="InterPro" id="IPR010243">
    <property type="entry name" value="RNA_pol_bsu_bac"/>
</dbReference>
<dbReference type="InterPro" id="IPR007121">
    <property type="entry name" value="RNA_pol_bsu_CS"/>
</dbReference>
<dbReference type="InterPro" id="IPR007644">
    <property type="entry name" value="RNA_pol_bsu_protrusion"/>
</dbReference>
<dbReference type="InterPro" id="IPR007642">
    <property type="entry name" value="RNA_pol_Rpb2_2"/>
</dbReference>
<dbReference type="InterPro" id="IPR037034">
    <property type="entry name" value="RNA_pol_Rpb2_2_sf"/>
</dbReference>
<dbReference type="InterPro" id="IPR007645">
    <property type="entry name" value="RNA_pol_Rpb2_3"/>
</dbReference>
<dbReference type="InterPro" id="IPR007641">
    <property type="entry name" value="RNA_pol_Rpb2_7"/>
</dbReference>
<dbReference type="InterPro" id="IPR014724">
    <property type="entry name" value="RNA_pol_RPB2_OB-fold"/>
</dbReference>
<dbReference type="NCBIfam" id="NF001616">
    <property type="entry name" value="PRK00405.1"/>
    <property type="match status" value="1"/>
</dbReference>
<dbReference type="PANTHER" id="PTHR20856">
    <property type="entry name" value="DNA-DIRECTED RNA POLYMERASE I SUBUNIT 2"/>
    <property type="match status" value="1"/>
</dbReference>
<dbReference type="Pfam" id="PF04563">
    <property type="entry name" value="RNA_pol_Rpb2_1"/>
    <property type="match status" value="1"/>
</dbReference>
<dbReference type="Pfam" id="PF04561">
    <property type="entry name" value="RNA_pol_Rpb2_2"/>
    <property type="match status" value="1"/>
</dbReference>
<dbReference type="Pfam" id="PF04565">
    <property type="entry name" value="RNA_pol_Rpb2_3"/>
    <property type="match status" value="1"/>
</dbReference>
<dbReference type="Pfam" id="PF10385">
    <property type="entry name" value="RNA_pol_Rpb2_45"/>
    <property type="match status" value="1"/>
</dbReference>
<dbReference type="Pfam" id="PF00562">
    <property type="entry name" value="RNA_pol_Rpb2_6"/>
    <property type="match status" value="1"/>
</dbReference>
<dbReference type="Pfam" id="PF04560">
    <property type="entry name" value="RNA_pol_Rpb2_7"/>
    <property type="match status" value="1"/>
</dbReference>
<dbReference type="SUPFAM" id="SSF64484">
    <property type="entry name" value="beta and beta-prime subunits of DNA dependent RNA-polymerase"/>
    <property type="match status" value="1"/>
</dbReference>
<dbReference type="PROSITE" id="PS01166">
    <property type="entry name" value="RNA_POL_BETA"/>
    <property type="match status" value="1"/>
</dbReference>
<evidence type="ECO:0000255" key="1">
    <source>
        <dbReference type="HAMAP-Rule" id="MF_01321"/>
    </source>
</evidence>
<accession>Q9PQV6</accession>
<proteinExistence type="inferred from homology"/>
<organism>
    <name type="scientific">Ureaplasma parvum serovar 3 (strain ATCC 700970)</name>
    <dbReference type="NCBI Taxonomy" id="273119"/>
    <lineage>
        <taxon>Bacteria</taxon>
        <taxon>Bacillati</taxon>
        <taxon>Mycoplasmatota</taxon>
        <taxon>Mycoplasmoidales</taxon>
        <taxon>Mycoplasmoidaceae</taxon>
        <taxon>Ureaplasma</taxon>
    </lineage>
</organism>